<gene>
    <name evidence="3" type="primary">orf44</name>
</gene>
<sequence length="274" mass="29618">MPQGITKTSNQIIPEVLAPMMQAQLEKKLRFASFAEVDSTLQGQPGDTLTFPAFVYSGDAQVVAEGEKIPTDILETKKREAKIRKIAKGTSITDEALLSGYGDPQGEQVRQHGLAHANKVDNDVLEALMGAKLTVNADITKLNGLQSAIDKFNDEDLEPMVLFINPLDAGKLRGDASTNFTRATELGDDIIVKGAFGEALGAIIVRTNKLEAGTAILAKKGAVKLILKRDFFLEVARDASTKTTALYSDKHYVAYLYDESKAVKITKGSGSLEM</sequence>
<proteinExistence type="evidence at protein level"/>
<organism>
    <name type="scientific">Staphylococcus phage phiMR11</name>
    <dbReference type="NCBI Taxonomy" id="379501"/>
    <lineage>
        <taxon>Viruses</taxon>
        <taxon>Duplodnaviria</taxon>
        <taxon>Heunggongvirae</taxon>
        <taxon>Uroviricota</taxon>
        <taxon>Caudoviricetes</taxon>
        <taxon>Azeredovirinae</taxon>
        <taxon>Phietavirus</taxon>
    </lineage>
</organism>
<feature type="initiator methionine" description="Removed" evidence="1">
    <location>
        <position position="1"/>
    </location>
</feature>
<feature type="chain" id="PRO_0000383662" description="Major capsid protein">
    <location>
        <begin position="2"/>
        <end position="274"/>
    </location>
</feature>
<accession>A9CRA7</accession>
<keyword id="KW-0167">Capsid protein</keyword>
<keyword id="KW-0903">Direct protein sequencing</keyword>
<keyword id="KW-0426">Late protein</keyword>
<keyword id="KW-1185">Reference proteome</keyword>
<keyword id="KW-0946">Virion</keyword>
<comment type="function">
    <text evidence="2">Assembles to form an icosahedral capsid.</text>
</comment>
<comment type="subcellular location">
    <subcellularLocation>
        <location evidence="2">Virion</location>
    </subcellularLocation>
</comment>
<reference evidence="2 3" key="1">
    <citation type="submission" date="2007-12" db="EMBL/GenBank/DDBJ databases">
        <authorList>
            <person name="Matsuzaki S."/>
            <person name="Hoshiba H."/>
        </authorList>
    </citation>
    <scope>NUCLEOTIDE SEQUENCE [GENOMIC DNA]</scope>
</reference>
<reference evidence="2 3" key="2">
    <citation type="submission" date="2009-06" db="UniProtKB">
        <authorList>
            <person name="Hoshiba H."/>
            <person name="Uchiyama J."/>
            <person name="Ujihara T."/>
            <person name="Wakiguchi H."/>
            <person name="Matsuzaki S."/>
        </authorList>
    </citation>
    <scope>PROTEIN SEQUENCE OF 2-21</scope>
</reference>
<organismHost>
    <name type="scientific">Staphylococcus aureus</name>
    <dbReference type="NCBI Taxonomy" id="1280"/>
</organismHost>
<evidence type="ECO:0000269" key="1">
    <source ref="2"/>
</evidence>
<evidence type="ECO:0000305" key="2"/>
<evidence type="ECO:0000312" key="3">
    <source>
        <dbReference type="EMBL" id="BAF95137.1"/>
    </source>
</evidence>
<protein>
    <recommendedName>
        <fullName evidence="2">Major capsid protein</fullName>
    </recommendedName>
    <alternativeName>
        <fullName evidence="2">Gene product 44</fullName>
        <shortName evidence="2">gp44</shortName>
    </alternativeName>
    <alternativeName>
        <fullName evidence="2">Major head protein</fullName>
    </alternativeName>
</protein>
<dbReference type="EMBL" id="AB370268">
    <property type="protein sequence ID" value="BAF95137.1"/>
    <property type="molecule type" value="Genomic_DNA"/>
</dbReference>
<dbReference type="RefSeq" id="YP_001604135.1">
    <property type="nucleotide sequence ID" value="NC_010147.1"/>
</dbReference>
<dbReference type="GeneID" id="5797096"/>
<dbReference type="KEGG" id="vg:5797096"/>
<dbReference type="OrthoDB" id="7082at10239"/>
<dbReference type="Proteomes" id="UP000001178">
    <property type="component" value="Segment"/>
</dbReference>
<dbReference type="GO" id="GO:0019028">
    <property type="term" value="C:viral capsid"/>
    <property type="evidence" value="ECO:0007669"/>
    <property type="project" value="UniProtKB-KW"/>
</dbReference>
<dbReference type="NCBIfam" id="TIGR04387">
    <property type="entry name" value="capsid_maj_N4"/>
    <property type="match status" value="1"/>
</dbReference>
<dbReference type="Pfam" id="PF25209">
    <property type="entry name" value="Phage_capsid_4"/>
    <property type="match status" value="1"/>
</dbReference>
<dbReference type="SUPFAM" id="SSF56563">
    <property type="entry name" value="Major capsid protein gp5"/>
    <property type="match status" value="1"/>
</dbReference>
<name>CAPSD_BPMR1</name>